<comment type="function">
    <text evidence="1">Catalyzes the synthesis of Und-PP-GlcNAc-ManNAcA (Lipid II), the second lipid-linked intermediate involved in enterobacterial common antigen (ECA) synthesis.</text>
</comment>
<comment type="catalytic activity">
    <reaction evidence="1">
        <text>UDP-N-acetyl-alpha-D-mannosaminouronate + N-acetyl-alpha-D-glucosaminyl-di-trans,octa-cis-undecaprenyl diphosphate = beta-D-ManNAcA-(1-&gt;4)-alpha-D-GlcNAc-di-trans,octa-cis-undecaprenyl diphosphate + UDP + H(+)</text>
        <dbReference type="Rhea" id="RHEA:28366"/>
        <dbReference type="ChEBI" id="CHEBI:15378"/>
        <dbReference type="ChEBI" id="CHEBI:58223"/>
        <dbReference type="ChEBI" id="CHEBI:61495"/>
        <dbReference type="ChEBI" id="CHEBI:62959"/>
        <dbReference type="ChEBI" id="CHEBI:70731"/>
        <dbReference type="EC" id="2.4.1.180"/>
    </reaction>
</comment>
<comment type="pathway">
    <text evidence="1">Bacterial outer membrane biogenesis; enterobacterial common antigen biosynthesis.</text>
</comment>
<comment type="similarity">
    <text evidence="1">Belongs to the glycosyltransferase 26 family.</text>
</comment>
<sequence>MTNNAAAPLYSLRGLPLIGWRDMSHALNYLFADGQLKQGTLVAINAEKLLTAEDNPEVRALIGAAEFKYADGISVVRSIRKKFPQAQVSRVAGADLWEALMARAGKEGTPVFLVGGKPEVLAQTEAKLRTQWNVNIVGSQDGYFTPEQRQALFARIHASGAKIVTVAMGSPKQELLMRDCREVHPHALYMGVGGTYDVFTGHVKRAPKIWQNLGLEWLYRLLSQPKRITRQMRLLRYLRWHYTGDL</sequence>
<accession>B5BIU3</accession>
<keyword id="KW-0328">Glycosyltransferase</keyword>
<keyword id="KW-0808">Transferase</keyword>
<dbReference type="EC" id="2.4.1.180" evidence="1"/>
<dbReference type="EMBL" id="FM200053">
    <property type="protein sequence ID" value="CAR61791.1"/>
    <property type="molecule type" value="Genomic_DNA"/>
</dbReference>
<dbReference type="RefSeq" id="WP_000183626.1">
    <property type="nucleotide sequence ID" value="NC_011147.1"/>
</dbReference>
<dbReference type="SMR" id="B5BIU3"/>
<dbReference type="CAZy" id="GT26">
    <property type="family name" value="Glycosyltransferase Family 26"/>
</dbReference>
<dbReference type="KEGG" id="sek:SSPA3513"/>
<dbReference type="HOGENOM" id="CLU_063203_3_2_6"/>
<dbReference type="UniPathway" id="UPA00566"/>
<dbReference type="Proteomes" id="UP000001869">
    <property type="component" value="Chromosome"/>
</dbReference>
<dbReference type="GO" id="GO:0047241">
    <property type="term" value="F:lipopolysaccharide N-acetylmannosaminouronosyltransferase activity"/>
    <property type="evidence" value="ECO:0007669"/>
    <property type="project" value="UniProtKB-UniRule"/>
</dbReference>
<dbReference type="GO" id="GO:0009246">
    <property type="term" value="P:enterobacterial common antigen biosynthetic process"/>
    <property type="evidence" value="ECO:0007669"/>
    <property type="project" value="UniProtKB-UniRule"/>
</dbReference>
<dbReference type="CDD" id="cd06533">
    <property type="entry name" value="Glyco_transf_WecG_TagA"/>
    <property type="match status" value="1"/>
</dbReference>
<dbReference type="HAMAP" id="MF_01001">
    <property type="entry name" value="WecG_RffM"/>
    <property type="match status" value="1"/>
</dbReference>
<dbReference type="InterPro" id="IPR023085">
    <property type="entry name" value="UDP-ManNAcA_Trfase_WecG"/>
</dbReference>
<dbReference type="InterPro" id="IPR004629">
    <property type="entry name" value="WecG_TagA_CpsF"/>
</dbReference>
<dbReference type="NCBIfam" id="NF002980">
    <property type="entry name" value="PRK03692.1"/>
    <property type="match status" value="1"/>
</dbReference>
<dbReference type="NCBIfam" id="TIGR00696">
    <property type="entry name" value="wecG_tagA_cpsF"/>
    <property type="match status" value="1"/>
</dbReference>
<dbReference type="PANTHER" id="PTHR34136">
    <property type="match status" value="1"/>
</dbReference>
<dbReference type="PANTHER" id="PTHR34136:SF1">
    <property type="entry name" value="UDP-N-ACETYL-D-MANNOSAMINURONIC ACID TRANSFERASE"/>
    <property type="match status" value="1"/>
</dbReference>
<dbReference type="Pfam" id="PF03808">
    <property type="entry name" value="Glyco_tran_WecG"/>
    <property type="match status" value="1"/>
</dbReference>
<feature type="chain" id="PRO_1000134588" description="UDP-N-acetyl-D-mannosaminuronic acid transferase">
    <location>
        <begin position="1"/>
        <end position="246"/>
    </location>
</feature>
<organism>
    <name type="scientific">Salmonella paratyphi A (strain AKU_12601)</name>
    <dbReference type="NCBI Taxonomy" id="554290"/>
    <lineage>
        <taxon>Bacteria</taxon>
        <taxon>Pseudomonadati</taxon>
        <taxon>Pseudomonadota</taxon>
        <taxon>Gammaproteobacteria</taxon>
        <taxon>Enterobacterales</taxon>
        <taxon>Enterobacteriaceae</taxon>
        <taxon>Salmonella</taxon>
    </lineage>
</organism>
<gene>
    <name evidence="1" type="primary">wecG</name>
    <name evidence="1" type="synonym">rffM</name>
    <name type="ordered locus">SSPA3513</name>
</gene>
<protein>
    <recommendedName>
        <fullName evidence="1">UDP-N-acetyl-D-mannosaminuronic acid transferase</fullName>
        <shortName evidence="1">UDP-ManNAcA transferase</shortName>
        <ecNumber evidence="1">2.4.1.180</ecNumber>
    </recommendedName>
</protein>
<reference key="1">
    <citation type="journal article" date="2009" name="BMC Genomics">
        <title>Pseudogene accumulation in the evolutionary histories of Salmonella enterica serovars Paratyphi A and Typhi.</title>
        <authorList>
            <person name="Holt K.E."/>
            <person name="Thomson N.R."/>
            <person name="Wain J."/>
            <person name="Langridge G.C."/>
            <person name="Hasan R."/>
            <person name="Bhutta Z.A."/>
            <person name="Quail M.A."/>
            <person name="Norbertczak H."/>
            <person name="Walker D."/>
            <person name="Simmonds M."/>
            <person name="White B."/>
            <person name="Bason N."/>
            <person name="Mungall K."/>
            <person name="Dougan G."/>
            <person name="Parkhill J."/>
        </authorList>
    </citation>
    <scope>NUCLEOTIDE SEQUENCE [LARGE SCALE GENOMIC DNA]</scope>
    <source>
        <strain>AKU_12601</strain>
    </source>
</reference>
<evidence type="ECO:0000255" key="1">
    <source>
        <dbReference type="HAMAP-Rule" id="MF_01001"/>
    </source>
</evidence>
<name>WECG_SALPK</name>
<proteinExistence type="inferred from homology"/>